<gene>
    <name type="primary">SRY</name>
    <name type="synonym">TDF</name>
</gene>
<comment type="function">
    <text evidence="1 2">Transcriptional regulator that controls a genetic switch in male development. It is necessary and sufficient for initiating male sex determination by directing the development of supporting cell precursors (pre-Sertoli cells) as Sertoli rather than granulosa cells. Involved in different aspects of gene regulation including promoter activation or repression. Binds to the DNA consensus sequence 5'-[AT]AACAA[AT]-3'. SRY HMG box recognizes DNA by partial intercalation in the minor groove and promotes DNA bending. Also involved in pre-mRNA splicing (By similarity). In male adult brain involved in the maintenance of motor functions of dopaminergic neurons (By similarity).</text>
</comment>
<comment type="subunit">
    <text evidence="2">Interacts with CALM, EP300, HDAC3, KPNB1, ZNF208 isoform KRAB-O, PARP1, SLC9A3R2 and WT1. The interaction with EP300 modulates its DNA-binding activity. The interaction with KPNB1 is sensitive to dissociation by Ran in the GTP-bound form. Interaction with PARP1 impaired its DNA-binding activity.</text>
</comment>
<comment type="subcellular location">
    <subcellularLocation>
        <location evidence="2">Nucleus speckle</location>
    </subcellularLocation>
    <subcellularLocation>
        <location evidence="2">Cytoplasm</location>
    </subcellularLocation>
    <subcellularLocation>
        <location evidence="2">Nucleus</location>
    </subcellularLocation>
</comment>
<comment type="similarity">
    <text evidence="5">Belongs to the SRY family.</text>
</comment>
<comment type="online information" name="Protein Spotlight">
    <link uri="https://www.proteinspotlight.org/back_issues/080"/>
    <text>The tenuous nature of sex - Issue 80 of March 2007</text>
</comment>
<keyword id="KW-0010">Activator</keyword>
<keyword id="KW-0112">Calmodulin-binding</keyword>
<keyword id="KW-0963">Cytoplasm</keyword>
<keyword id="KW-0221">Differentiation</keyword>
<keyword id="KW-0238">DNA-binding</keyword>
<keyword id="KW-0539">Nucleus</keyword>
<keyword id="KW-0678">Repressor</keyword>
<keyword id="KW-0726">Sexual differentiation</keyword>
<keyword id="KW-0804">Transcription</keyword>
<keyword id="KW-0805">Transcription regulation</keyword>
<proteinExistence type="inferred from homology"/>
<feature type="chain" id="PRO_0000048675" description="Sex-determining region Y protein">
    <location>
        <begin position="1"/>
        <end position="201"/>
    </location>
</feature>
<feature type="DNA-binding region" description="HMG box" evidence="3">
    <location>
        <begin position="54"/>
        <end position="122"/>
    </location>
</feature>
<feature type="region of interest" description="Disordered" evidence="4">
    <location>
        <begin position="162"/>
        <end position="201"/>
    </location>
</feature>
<feature type="compositionally biased region" description="Polar residues" evidence="4">
    <location>
        <begin position="186"/>
        <end position="195"/>
    </location>
</feature>
<protein>
    <recommendedName>
        <fullName>Sex-determining region Y protein</fullName>
    </recommendedName>
    <alternativeName>
        <fullName>Testis-determining factor</fullName>
    </alternativeName>
</protein>
<accession>Q864P8</accession>
<dbReference type="EMBL" id="AB108523">
    <property type="protein sequence ID" value="BAC75655.1"/>
    <property type="molecule type" value="Genomic_DNA"/>
</dbReference>
<dbReference type="SMR" id="Q864P8"/>
<dbReference type="GO" id="GO:0005737">
    <property type="term" value="C:cytoplasm"/>
    <property type="evidence" value="ECO:0007669"/>
    <property type="project" value="UniProtKB-SubCell"/>
</dbReference>
<dbReference type="GO" id="GO:0016607">
    <property type="term" value="C:nuclear speck"/>
    <property type="evidence" value="ECO:0007669"/>
    <property type="project" value="UniProtKB-SubCell"/>
</dbReference>
<dbReference type="GO" id="GO:0005634">
    <property type="term" value="C:nucleus"/>
    <property type="evidence" value="ECO:0000250"/>
    <property type="project" value="UniProtKB"/>
</dbReference>
<dbReference type="GO" id="GO:0005516">
    <property type="term" value="F:calmodulin binding"/>
    <property type="evidence" value="ECO:0007669"/>
    <property type="project" value="UniProtKB-KW"/>
</dbReference>
<dbReference type="GO" id="GO:0001228">
    <property type="term" value="F:DNA-binding transcription activator activity, RNA polymerase II-specific"/>
    <property type="evidence" value="ECO:0007669"/>
    <property type="project" value="TreeGrafter"/>
</dbReference>
<dbReference type="GO" id="GO:0000978">
    <property type="term" value="F:RNA polymerase II cis-regulatory region sequence-specific DNA binding"/>
    <property type="evidence" value="ECO:0007669"/>
    <property type="project" value="TreeGrafter"/>
</dbReference>
<dbReference type="GO" id="GO:0030154">
    <property type="term" value="P:cell differentiation"/>
    <property type="evidence" value="ECO:0007669"/>
    <property type="project" value="UniProtKB-KW"/>
</dbReference>
<dbReference type="GO" id="GO:0030238">
    <property type="term" value="P:male sex determination"/>
    <property type="evidence" value="ECO:0007669"/>
    <property type="project" value="InterPro"/>
</dbReference>
<dbReference type="GO" id="GO:0007548">
    <property type="term" value="P:sex differentiation"/>
    <property type="evidence" value="ECO:0007669"/>
    <property type="project" value="UniProtKB-KW"/>
</dbReference>
<dbReference type="CDD" id="cd22034">
    <property type="entry name" value="HMG-box_SoxA_SRY"/>
    <property type="match status" value="1"/>
</dbReference>
<dbReference type="FunFam" id="1.10.30.10:FF:000002">
    <property type="entry name" value="transcription factor Sox-2"/>
    <property type="match status" value="1"/>
</dbReference>
<dbReference type="Gene3D" id="1.10.30.10">
    <property type="entry name" value="High mobility group box domain"/>
    <property type="match status" value="1"/>
</dbReference>
<dbReference type="InterPro" id="IPR009071">
    <property type="entry name" value="HMG_box_dom"/>
</dbReference>
<dbReference type="InterPro" id="IPR036910">
    <property type="entry name" value="HMG_box_dom_sf"/>
</dbReference>
<dbReference type="InterPro" id="IPR017253">
    <property type="entry name" value="SRY"/>
</dbReference>
<dbReference type="InterPro" id="IPR050140">
    <property type="entry name" value="SRY-related_HMG-box_TF-like"/>
</dbReference>
<dbReference type="PANTHER" id="PTHR10270:SF161">
    <property type="entry name" value="SEX-DETERMINING REGION Y PROTEIN"/>
    <property type="match status" value="1"/>
</dbReference>
<dbReference type="PANTHER" id="PTHR10270">
    <property type="entry name" value="SOX TRANSCRIPTION FACTOR"/>
    <property type="match status" value="1"/>
</dbReference>
<dbReference type="Pfam" id="PF00505">
    <property type="entry name" value="HMG_box"/>
    <property type="match status" value="1"/>
</dbReference>
<dbReference type="PIRSF" id="PIRSF037653">
    <property type="entry name" value="SRY"/>
    <property type="match status" value="1"/>
</dbReference>
<dbReference type="SMART" id="SM00398">
    <property type="entry name" value="HMG"/>
    <property type="match status" value="1"/>
</dbReference>
<dbReference type="SUPFAM" id="SSF47095">
    <property type="entry name" value="HMG-box"/>
    <property type="match status" value="1"/>
</dbReference>
<dbReference type="PROSITE" id="PS50118">
    <property type="entry name" value="HMG_BOX_2"/>
    <property type="match status" value="1"/>
</dbReference>
<reference key="1">
    <citation type="journal article" date="2003" name="Mammal Study">
        <title>SRY gene structure and phylogeny in the cetacean species.</title>
        <authorList>
            <person name="Nishida S."/>
            <person name="Pastene L.A."/>
            <person name="Goto M."/>
            <person name="Koike H."/>
        </authorList>
    </citation>
    <scope>NUCLEOTIDE SEQUENCE [GENOMIC DNA]</scope>
</reference>
<organism>
    <name type="scientific">Sagmatias obliquidens</name>
    <name type="common">Pacific white-sided dolphin</name>
    <name type="synonym">Lagenorhynchus obliquidens</name>
    <dbReference type="NCBI Taxonomy" id="3371155"/>
    <lineage>
        <taxon>Eukaryota</taxon>
        <taxon>Metazoa</taxon>
        <taxon>Chordata</taxon>
        <taxon>Craniata</taxon>
        <taxon>Vertebrata</taxon>
        <taxon>Euteleostomi</taxon>
        <taxon>Mammalia</taxon>
        <taxon>Eutheria</taxon>
        <taxon>Laurasiatheria</taxon>
        <taxon>Artiodactyla</taxon>
        <taxon>Whippomorpha</taxon>
        <taxon>Cetacea</taxon>
        <taxon>Odontoceti</taxon>
        <taxon>Delphinidae</taxon>
        <taxon>Sagmatias</taxon>
    </lineage>
</organism>
<name>SRY_SAGOB</name>
<evidence type="ECO:0000250" key="1">
    <source>
        <dbReference type="UniProtKB" id="P36394"/>
    </source>
</evidence>
<evidence type="ECO:0000250" key="2">
    <source>
        <dbReference type="UniProtKB" id="Q05066"/>
    </source>
</evidence>
<evidence type="ECO:0000255" key="3">
    <source>
        <dbReference type="PROSITE-ProRule" id="PRU00267"/>
    </source>
</evidence>
<evidence type="ECO:0000256" key="4">
    <source>
        <dbReference type="SAM" id="MobiDB-lite"/>
    </source>
</evidence>
<evidence type="ECO:0000305" key="5"/>
<sequence length="201" mass="23096">MFRTVNGEDYSPAVQQRNILDFGKAHSLLWTDNGSANDRCETGGNCRESGQDRVKRPMNAFIVWSRDQRRKVALENPQMQNSEISKRLGYDWKMLTEAEKQPFFEEAQRLRAMHRDKYPGYKYRPRRKAKEATEIASRRLFSTVQPNAHRGDVVPLPIQGRLRQGHTFTNGKPVKPLTAHEHKQLTPATGASQQLDKPAPQ</sequence>